<organism>
    <name type="scientific">Drosophila melanogaster</name>
    <name type="common">Fruit fly</name>
    <dbReference type="NCBI Taxonomy" id="7227"/>
    <lineage>
        <taxon>Eukaryota</taxon>
        <taxon>Metazoa</taxon>
        <taxon>Ecdysozoa</taxon>
        <taxon>Arthropoda</taxon>
        <taxon>Hexapoda</taxon>
        <taxon>Insecta</taxon>
        <taxon>Pterygota</taxon>
        <taxon>Neoptera</taxon>
        <taxon>Endopterygota</taxon>
        <taxon>Diptera</taxon>
        <taxon>Brachycera</taxon>
        <taxon>Muscomorpha</taxon>
        <taxon>Ephydroidea</taxon>
        <taxon>Drosophilidae</taxon>
        <taxon>Drosophila</taxon>
        <taxon>Sophophora</taxon>
    </lineage>
</organism>
<name>PDE4B_DROME</name>
<sequence length="1070" mass="115079">MSQESNGGPAAGGGAAAAPPPPPQYIITTPSEVDPDEVRSMADLELGSPEKQVQVQSQKFSSTSSTTKVATHSFSMSSSAGTTGQQSKQDSAQQIQQLQQLQQLQQLQQQQQQQQSQRIISSSTRSQSLQSSTIVGEATTITSGAAQILSASAAASLAQQLKAQSSTSIITSSEQRTSTSTSSSSSTRYIASGSSNLAGGNSNSASSASSKTRFQSFLQQPEGAHGFLTAHQKHVRQFVRSTSAHSEAAAGVAGARAEKCIRSASTQIDDASVAGVVESAGNLTDSSATGGSMQLSMSKLGLQQSSSILISKSAETIEMKSSSAGMRTQLTLSGGFLAPPGNRKITILSPIHAPPGLHDMLKRAQGRSPLSPRISFPGSDSDLFGFDVENGQGARSPLEGGSPSAGLVLQNLPQRRESFLYRSDSDFEMSPKSMSRNSSIASERFKEQEASILVDRSHGEDLIVTPFAQILASLRSVRNNLLSLTNVPASNKSRRPNQSSSASRSGNPPGAPLSQGEEAYTRLATDTIEELDWCLDQLETIQTHRSVSDMASLKFKRMLNKELSHFSESSRSGNQISEYICSTFLDKQQEFDLPSLRVEDNPELVAANAAAGQQSAGQYARSRSPRGPPMSQISGVKRPLSHTNSFTGERLPTFGVETPRENELGTLLGELDTWGIQIFSIGEFSVNRPLTCVAYTIFQSRELLTSLMIPPKTFLNFMSTLEDHYVKDNPFHNSLHAADVTQSTNVLLNTPALEGVFTPLEVGGALFAACIHDVDHPGLTNQFLVNSSSELALMYNDESVLENHHLAVAFKLLQNQGCDIFCNMQKKQRQTLRKMVIDIVLSTDMSKHMSLLADLKTMVETKKVAGSGVLLLDNYTDRIQVLENLVHCADLSNPTKPLPLYKRWVALLMEEFFLQGDKERESGMDISPMCDRHNATIEKSQVGFIDYIVHPLWETWADLVHPDAQDILDTLEENRDYYQSMIPPSPPPSGVDENPQEDRIRFQVTLEESDQENLAELEEGDESGGESTTTGTTGTTAASALSGAGGGGGGGGGMAPRTGGCQNQPQHGGM</sequence>
<dbReference type="EC" id="3.1.4.53" evidence="5"/>
<dbReference type="EMBL" id="X55167">
    <property type="protein sequence ID" value="CAA38960.1"/>
    <property type="status" value="ALT_SEQ"/>
    <property type="molecule type" value="Genomic_DNA"/>
</dbReference>
<dbReference type="EMBL" id="X55168">
    <property type="protein sequence ID" value="CAA38960.1"/>
    <property type="status" value="JOINED"/>
    <property type="molecule type" value="Genomic_DNA"/>
</dbReference>
<dbReference type="EMBL" id="X55169">
    <property type="protein sequence ID" value="CAA38960.1"/>
    <property type="status" value="JOINED"/>
    <property type="molecule type" value="Genomic_DNA"/>
</dbReference>
<dbReference type="EMBL" id="X55170">
    <property type="protein sequence ID" value="CAA38960.1"/>
    <property type="status" value="JOINED"/>
    <property type="molecule type" value="Genomic_DNA"/>
</dbReference>
<dbReference type="EMBL" id="X55171">
    <property type="protein sequence ID" value="CAA38960.1"/>
    <property type="status" value="JOINED"/>
    <property type="molecule type" value="Genomic_DNA"/>
</dbReference>
<dbReference type="EMBL" id="X55172">
    <property type="protein sequence ID" value="CAA38960.1"/>
    <property type="status" value="JOINED"/>
    <property type="molecule type" value="Genomic_DNA"/>
</dbReference>
<dbReference type="EMBL" id="X55173">
    <property type="protein sequence ID" value="CAA38960.1"/>
    <property type="status" value="JOINED"/>
    <property type="molecule type" value="Genomic_DNA"/>
</dbReference>
<dbReference type="EMBL" id="X55174">
    <property type="protein sequence ID" value="CAA38960.1"/>
    <property type="status" value="JOINED"/>
    <property type="molecule type" value="Genomic_DNA"/>
</dbReference>
<dbReference type="EMBL" id="X55175">
    <property type="protein sequence ID" value="CAA38960.1"/>
    <property type="status" value="JOINED"/>
    <property type="molecule type" value="Genomic_DNA"/>
</dbReference>
<dbReference type="EMBL" id="M14982">
    <property type="protein sequence ID" value="AAC34201.1"/>
    <property type="status" value="ALT_INIT"/>
    <property type="molecule type" value="Unassigned_DNA"/>
</dbReference>
<dbReference type="EMBL" id="M14978">
    <property type="protein sequence ID" value="AAC34201.1"/>
    <property type="status" value="JOINED"/>
    <property type="molecule type" value="Unassigned_DNA"/>
</dbReference>
<dbReference type="EMBL" id="M14979">
    <property type="protein sequence ID" value="AAC34201.1"/>
    <property type="status" value="JOINED"/>
    <property type="molecule type" value="Unassigned_DNA"/>
</dbReference>
<dbReference type="EMBL" id="M14980">
    <property type="protein sequence ID" value="AAC34201.1"/>
    <property type="status" value="JOINED"/>
    <property type="molecule type" value="Unassigned_DNA"/>
</dbReference>
<dbReference type="EMBL" id="M14981">
    <property type="protein sequence ID" value="AAC34201.1"/>
    <property type="status" value="JOINED"/>
    <property type="molecule type" value="Unassigned_DNA"/>
</dbReference>
<dbReference type="EMBL" id="AE014298">
    <property type="protein sequence ID" value="AAF45861.2"/>
    <property type="molecule type" value="Genomic_DNA"/>
</dbReference>
<dbReference type="EMBL" id="AE014298">
    <property type="protein sequence ID" value="AAF45862.3"/>
    <property type="molecule type" value="Genomic_DNA"/>
</dbReference>
<dbReference type="EMBL" id="AE014298">
    <property type="protein sequence ID" value="AAF45865.2"/>
    <property type="molecule type" value="Genomic_DNA"/>
</dbReference>
<dbReference type="EMBL" id="AE014298">
    <property type="protein sequence ID" value="AAN09600.1"/>
    <property type="molecule type" value="Genomic_DNA"/>
</dbReference>
<dbReference type="EMBL" id="AE014298">
    <property type="protein sequence ID" value="AAN09601.3"/>
    <property type="molecule type" value="Genomic_DNA"/>
</dbReference>
<dbReference type="EMBL" id="AE014298">
    <property type="protein sequence ID" value="AAN09602.2"/>
    <property type="molecule type" value="Genomic_DNA"/>
</dbReference>
<dbReference type="EMBL" id="AE014298">
    <property type="protein sequence ID" value="AAN09604.1"/>
    <property type="molecule type" value="Genomic_DNA"/>
</dbReference>
<dbReference type="EMBL" id="AE014298">
    <property type="protein sequence ID" value="AAN09607.2"/>
    <property type="molecule type" value="Genomic_DNA"/>
</dbReference>
<dbReference type="EMBL" id="AE014298">
    <property type="protein sequence ID" value="AGB95048.1"/>
    <property type="molecule type" value="Genomic_DNA"/>
</dbReference>
<dbReference type="EMBL" id="AE014298">
    <property type="protein sequence ID" value="AGB95049.1"/>
    <property type="molecule type" value="Genomic_DNA"/>
</dbReference>
<dbReference type="EMBL" id="AL121800">
    <property type="protein sequence ID" value="CAD24781.1"/>
    <property type="status" value="ALT_SEQ"/>
    <property type="molecule type" value="Genomic_DNA"/>
</dbReference>
<dbReference type="EMBL" id="AY119511">
    <property type="protein sequence ID" value="AAM50165.1"/>
    <property type="molecule type" value="mRNA"/>
</dbReference>
<dbReference type="PIR" id="S65543">
    <property type="entry name" value="S65543"/>
</dbReference>
<dbReference type="RefSeq" id="NP_001259201.1">
    <molecule id="P12252-7"/>
    <property type="nucleotide sequence ID" value="NM_001272272.1"/>
</dbReference>
<dbReference type="RefSeq" id="NP_001259202.1">
    <molecule id="P12252-8"/>
    <property type="nucleotide sequence ID" value="NM_001272273.1"/>
</dbReference>
<dbReference type="RefSeq" id="NP_001259203.1">
    <molecule id="P12252-9"/>
    <property type="nucleotide sequence ID" value="NM_001272274.1"/>
</dbReference>
<dbReference type="RefSeq" id="NP_726849.1">
    <molecule id="P12252-1"/>
    <property type="nucleotide sequence ID" value="NM_166961.2"/>
</dbReference>
<dbReference type="RefSeq" id="NP_726850.1">
    <molecule id="P12252-4"/>
    <property type="nucleotide sequence ID" value="NM_166962.2"/>
</dbReference>
<dbReference type="RefSeq" id="NP_726851.3">
    <molecule id="P12252-9"/>
    <property type="nucleotide sequence ID" value="NM_166963.2"/>
</dbReference>
<dbReference type="RefSeq" id="NP_726852.2">
    <molecule id="P12252-5"/>
    <property type="nucleotide sequence ID" value="NM_166964.2"/>
</dbReference>
<dbReference type="RefSeq" id="NP_726853.2">
    <molecule id="P12252-1"/>
    <property type="nucleotide sequence ID" value="NM_166965.2"/>
</dbReference>
<dbReference type="RefSeq" id="NP_726854.2">
    <molecule id="P12252-8"/>
    <property type="nucleotide sequence ID" value="NM_166966.3"/>
</dbReference>
<dbReference type="RefSeq" id="NP_726855.1">
    <molecule id="P12252-3"/>
    <property type="nucleotide sequence ID" value="NM_166967.2"/>
</dbReference>
<dbReference type="RefSeq" id="NP_726857.1">
    <molecule id="P12252-7"/>
    <property type="nucleotide sequence ID" value="NM_166969.2"/>
</dbReference>
<dbReference type="RefSeq" id="NP_726859.2">
    <molecule id="P12252-6"/>
    <property type="nucleotide sequence ID" value="NM_166971.2"/>
</dbReference>
<dbReference type="SMR" id="P12252"/>
<dbReference type="BioGRID" id="57834">
    <property type="interactions" value="19"/>
</dbReference>
<dbReference type="IntAct" id="P12252">
    <property type="interactions" value="4"/>
</dbReference>
<dbReference type="DNASU" id="31309"/>
<dbReference type="EnsemblMetazoa" id="FBtr0070511">
    <molecule id="P12252-1"/>
    <property type="protein sequence ID" value="FBpp0070487"/>
    <property type="gene ID" value="FBgn0000479"/>
</dbReference>
<dbReference type="EnsemblMetazoa" id="FBtr0070512">
    <molecule id="P12252-4"/>
    <property type="protein sequence ID" value="FBpp0070488"/>
    <property type="gene ID" value="FBgn0000479"/>
</dbReference>
<dbReference type="EnsemblMetazoa" id="FBtr0070513">
    <molecule id="P12252-1"/>
    <property type="protein sequence ID" value="FBpp0070489"/>
    <property type="gene ID" value="FBgn0000479"/>
</dbReference>
<dbReference type="EnsemblMetazoa" id="FBtr0070515">
    <molecule id="P12252-5"/>
    <property type="protein sequence ID" value="FBpp0070491"/>
    <property type="gene ID" value="FBgn0000479"/>
</dbReference>
<dbReference type="EnsemblMetazoa" id="FBtr0070517">
    <molecule id="P12252-3"/>
    <property type="protein sequence ID" value="FBpp0070493"/>
    <property type="gene ID" value="FBgn0000479"/>
</dbReference>
<dbReference type="EnsemblMetazoa" id="FBtr0070518">
    <molecule id="P12252-7"/>
    <property type="protein sequence ID" value="FBpp0070494"/>
    <property type="gene ID" value="FBgn0000479"/>
</dbReference>
<dbReference type="EnsemblMetazoa" id="FBtr0070522">
    <molecule id="P12252-6"/>
    <property type="protein sequence ID" value="FBpp0070498"/>
    <property type="gene ID" value="FBgn0000479"/>
</dbReference>
<dbReference type="EnsemblMetazoa" id="FBtr0333312">
    <molecule id="P12252-7"/>
    <property type="protein sequence ID" value="FBpp0305504"/>
    <property type="gene ID" value="FBgn0000479"/>
</dbReference>
<dbReference type="EnsemblMetazoa" id="FBtr0333313">
    <molecule id="P12252-8"/>
    <property type="protein sequence ID" value="FBpp0305505"/>
    <property type="gene ID" value="FBgn0000479"/>
</dbReference>
<dbReference type="EnsemblMetazoa" id="FBtr0333314">
    <molecule id="P12252-8"/>
    <property type="protein sequence ID" value="FBpp0305506"/>
    <property type="gene ID" value="FBgn0000479"/>
</dbReference>
<dbReference type="EnsemblMetazoa" id="FBtr0333316">
    <molecule id="P12252-9"/>
    <property type="protein sequence ID" value="FBpp0305508"/>
    <property type="gene ID" value="FBgn0000479"/>
</dbReference>
<dbReference type="EnsemblMetazoa" id="FBtr0333317">
    <molecule id="P12252-9"/>
    <property type="protein sequence ID" value="FBpp0305509"/>
    <property type="gene ID" value="FBgn0000479"/>
</dbReference>
<dbReference type="GeneID" id="31309"/>
<dbReference type="UCSC" id="CG32498-RA">
    <molecule id="P12252-1"/>
    <property type="organism name" value="d. melanogaster"/>
</dbReference>
<dbReference type="AGR" id="FB:FBgn0000479"/>
<dbReference type="CTD" id="31309"/>
<dbReference type="FlyBase" id="FBgn0000479">
    <property type="gene designation" value="dnc"/>
</dbReference>
<dbReference type="VEuPathDB" id="VectorBase:FBgn0000479"/>
<dbReference type="GeneTree" id="ENSGT00940000155190"/>
<dbReference type="OrthoDB" id="189220at2759"/>
<dbReference type="UniPathway" id="UPA00762">
    <property type="reaction ID" value="UER00747"/>
</dbReference>
<dbReference type="BioGRID-ORCS" id="31309">
    <property type="hits" value="1 hit in 3 CRISPR screens"/>
</dbReference>
<dbReference type="ChiTaRS" id="dnc">
    <property type="organism name" value="fly"/>
</dbReference>
<dbReference type="GenomeRNAi" id="31309"/>
<dbReference type="Proteomes" id="UP000000803">
    <property type="component" value="Chromosome X"/>
</dbReference>
<dbReference type="Bgee" id="FBgn0000479">
    <property type="expression patterns" value="Expressed in muscle cell in antenna and 285 other cell types or tissues"/>
</dbReference>
<dbReference type="ExpressionAtlas" id="P12252">
    <property type="expression patterns" value="baseline and differential"/>
</dbReference>
<dbReference type="GO" id="GO:0045202">
    <property type="term" value="C:synapse"/>
    <property type="evidence" value="ECO:0007669"/>
    <property type="project" value="GOC"/>
</dbReference>
<dbReference type="GO" id="GO:0004115">
    <property type="term" value="F:3',5'-cyclic-AMP phosphodiesterase activity"/>
    <property type="evidence" value="ECO:0000250"/>
    <property type="project" value="FlyBase"/>
</dbReference>
<dbReference type="GO" id="GO:0047555">
    <property type="term" value="F:3',5'-cyclic-GMP phosphodiesterase activity"/>
    <property type="evidence" value="ECO:0000318"/>
    <property type="project" value="GO_Central"/>
</dbReference>
<dbReference type="GO" id="GO:0046872">
    <property type="term" value="F:metal ion binding"/>
    <property type="evidence" value="ECO:0007669"/>
    <property type="project" value="UniProtKB-KW"/>
</dbReference>
<dbReference type="GO" id="GO:0007615">
    <property type="term" value="P:anesthesia-resistant memory"/>
    <property type="evidence" value="ECO:0000315"/>
    <property type="project" value="FlyBase"/>
</dbReference>
<dbReference type="GO" id="GO:0008306">
    <property type="term" value="P:associative learning"/>
    <property type="evidence" value="ECO:0000315"/>
    <property type="project" value="FlyBase"/>
</dbReference>
<dbReference type="GO" id="GO:0048675">
    <property type="term" value="P:axon extension"/>
    <property type="evidence" value="ECO:0000315"/>
    <property type="project" value="FlyBase"/>
</dbReference>
<dbReference type="GO" id="GO:0006198">
    <property type="term" value="P:cAMP catabolic process"/>
    <property type="evidence" value="ECO:0007669"/>
    <property type="project" value="UniProtKB-UniPathway"/>
</dbReference>
<dbReference type="GO" id="GO:0019933">
    <property type="term" value="P:cAMP-mediated signaling"/>
    <property type="evidence" value="ECO:0000318"/>
    <property type="project" value="GO_Central"/>
</dbReference>
<dbReference type="GO" id="GO:0007268">
    <property type="term" value="P:chemical synaptic transmission"/>
    <property type="evidence" value="ECO:0000315"/>
    <property type="project" value="FlyBase"/>
</dbReference>
<dbReference type="GO" id="GO:0007623">
    <property type="term" value="P:circadian rhythm"/>
    <property type="evidence" value="ECO:0000304"/>
    <property type="project" value="FlyBase"/>
</dbReference>
<dbReference type="GO" id="GO:0001661">
    <property type="term" value="P:conditioned taste aversion"/>
    <property type="evidence" value="ECO:0000315"/>
    <property type="project" value="FlyBase"/>
</dbReference>
<dbReference type="GO" id="GO:0007619">
    <property type="term" value="P:courtship behavior"/>
    <property type="evidence" value="ECO:0000304"/>
    <property type="project" value="FlyBase"/>
</dbReference>
<dbReference type="GO" id="GO:0007612">
    <property type="term" value="P:learning"/>
    <property type="evidence" value="ECO:0000315"/>
    <property type="project" value="FlyBase"/>
</dbReference>
<dbReference type="GO" id="GO:0007617">
    <property type="term" value="P:mating behavior"/>
    <property type="evidence" value="ECO:0000304"/>
    <property type="project" value="FlyBase"/>
</dbReference>
<dbReference type="GO" id="GO:0007613">
    <property type="term" value="P:memory"/>
    <property type="evidence" value="ECO:0000315"/>
    <property type="project" value="FlyBase"/>
</dbReference>
<dbReference type="GO" id="GO:0046958">
    <property type="term" value="P:nonassociative learning"/>
    <property type="evidence" value="ECO:0000304"/>
    <property type="project" value="FlyBase"/>
</dbReference>
<dbReference type="GO" id="GO:0008355">
    <property type="term" value="P:olfactory learning"/>
    <property type="evidence" value="ECO:0000304"/>
    <property type="project" value="FlyBase"/>
</dbReference>
<dbReference type="GO" id="GO:0007614">
    <property type="term" value="P:short-term memory"/>
    <property type="evidence" value="ECO:0000315"/>
    <property type="project" value="FlyBase"/>
</dbReference>
<dbReference type="GO" id="GO:0040040">
    <property type="term" value="P:thermosensory behavior"/>
    <property type="evidence" value="ECO:0000315"/>
    <property type="project" value="FlyBase"/>
</dbReference>
<dbReference type="CDD" id="cd00077">
    <property type="entry name" value="HDc"/>
    <property type="match status" value="1"/>
</dbReference>
<dbReference type="FunFam" id="1.10.1300.10:FF:000001">
    <property type="entry name" value="Phosphodiesterase"/>
    <property type="match status" value="1"/>
</dbReference>
<dbReference type="Gene3D" id="1.10.1300.10">
    <property type="entry name" value="3'5'-cyclic nucleotide phosphodiesterase, catalytic domain"/>
    <property type="match status" value="1"/>
</dbReference>
<dbReference type="InterPro" id="IPR003607">
    <property type="entry name" value="HD/PDEase_dom"/>
</dbReference>
<dbReference type="InterPro" id="IPR040844">
    <property type="entry name" value="PDE4_UCR"/>
</dbReference>
<dbReference type="InterPro" id="IPR023088">
    <property type="entry name" value="PDEase"/>
</dbReference>
<dbReference type="InterPro" id="IPR002073">
    <property type="entry name" value="PDEase_catalytic_dom"/>
</dbReference>
<dbReference type="InterPro" id="IPR036971">
    <property type="entry name" value="PDEase_catalytic_dom_sf"/>
</dbReference>
<dbReference type="InterPro" id="IPR023174">
    <property type="entry name" value="PDEase_CS"/>
</dbReference>
<dbReference type="PANTHER" id="PTHR11347">
    <property type="entry name" value="CYCLIC NUCLEOTIDE PHOSPHODIESTERASE"/>
    <property type="match status" value="1"/>
</dbReference>
<dbReference type="Pfam" id="PF18100">
    <property type="entry name" value="PDE4_UCR"/>
    <property type="match status" value="1"/>
</dbReference>
<dbReference type="Pfam" id="PF00233">
    <property type="entry name" value="PDEase_I"/>
    <property type="match status" value="1"/>
</dbReference>
<dbReference type="PRINTS" id="PR00387">
    <property type="entry name" value="PDIESTERASE1"/>
</dbReference>
<dbReference type="SUPFAM" id="SSF109604">
    <property type="entry name" value="HD-domain/PDEase-like"/>
    <property type="match status" value="1"/>
</dbReference>
<dbReference type="PROSITE" id="PS00126">
    <property type="entry name" value="PDEASE_I_1"/>
    <property type="match status" value="1"/>
</dbReference>
<dbReference type="PROSITE" id="PS51845">
    <property type="entry name" value="PDEASE_I_2"/>
    <property type="match status" value="1"/>
</dbReference>
<accession>P12252</accession>
<accession>M9PGD1</accession>
<accession>M9PGX1</accession>
<accession>O76918</accession>
<accession>Q8IRU3</accession>
<accession>Q8IRU6</accession>
<accession>Q8IRU8</accession>
<accession>Q8IRV0</accession>
<accession>Q8MRN3</accession>
<accession>Q8T8M0</accession>
<accession>Q9NF62</accession>
<accession>Q9W4S8</accession>
<accession>Q9W4T0</accession>
<accession>Q9W4T1</accession>
<keyword id="KW-0024">Alternative initiation</keyword>
<keyword id="KW-0025">Alternative splicing</keyword>
<keyword id="KW-0114">cAMP</keyword>
<keyword id="KW-0378">Hydrolase</keyword>
<keyword id="KW-0479">Metal-binding</keyword>
<keyword id="KW-1185">Reference proteome</keyword>
<reference key="1">
    <citation type="journal article" date="1991" name="J. Mol. Biol.">
        <title>Characterization of the memory gene dunce of Drosophila melanogaster.</title>
        <authorList>
            <person name="Qiu Y.H."/>
            <person name="Chen C.-N."/>
            <person name="Malone T."/>
            <person name="Richter L."/>
            <person name="Beckendorf S.K."/>
            <person name="Davis R.L."/>
        </authorList>
    </citation>
    <scope>NUCLEOTIDE SEQUENCE [GENOMIC DNA / MRNA] (ISOFORMS III; IV AND R)</scope>
    <scope>NUCLEOTIDE SEQUENCE [GENOMIC DNA / MRNA] OF 293-1070 (ISOFORMS II; V AND VI)</scope>
    <scope>NUCLEOTIDE SEQUENCE [GENOMIC DNA / MRNA] OF 356-1070 (ISOFORM I)</scope>
    <scope>SEQUENCE REVISION</scope>
    <scope>FUNCTION</scope>
    <scope>CATALYTIC ACTIVITY</scope>
    <scope>SUBUNIT</scope>
    <source>
        <strain>Canton-S</strain>
    </source>
</reference>
<reference key="2">
    <citation type="journal article" date="1986" name="Proc. Natl. Acad. Sci. U.S.A.">
        <title>Molecular analysis of cDNA clones and the corresponding genomic coding sequences of the Drosophila dunce+ gene, the structural gene for cAMP phosphodiesterase.</title>
        <authorList>
            <person name="Chen C.-N."/>
            <person name="Denome S."/>
            <person name="Davis R.L."/>
        </authorList>
    </citation>
    <scope>NUCLEOTIDE SEQUENCE [GENOMIC DNA / MRNA] OF 699-1070</scope>
</reference>
<reference key="3">
    <citation type="journal article" date="2000" name="Science">
        <title>The genome sequence of Drosophila melanogaster.</title>
        <authorList>
            <person name="Adams M.D."/>
            <person name="Celniker S.E."/>
            <person name="Holt R.A."/>
            <person name="Evans C.A."/>
            <person name="Gocayne J.D."/>
            <person name="Amanatides P.G."/>
            <person name="Scherer S.E."/>
            <person name="Li P.W."/>
            <person name="Hoskins R.A."/>
            <person name="Galle R.F."/>
            <person name="George R.A."/>
            <person name="Lewis S.E."/>
            <person name="Richards S."/>
            <person name="Ashburner M."/>
            <person name="Henderson S.N."/>
            <person name="Sutton G.G."/>
            <person name="Wortman J.R."/>
            <person name="Yandell M.D."/>
            <person name="Zhang Q."/>
            <person name="Chen L.X."/>
            <person name="Brandon R.C."/>
            <person name="Rogers Y.-H.C."/>
            <person name="Blazej R.G."/>
            <person name="Champe M."/>
            <person name="Pfeiffer B.D."/>
            <person name="Wan K.H."/>
            <person name="Doyle C."/>
            <person name="Baxter E.G."/>
            <person name="Helt G."/>
            <person name="Nelson C.R."/>
            <person name="Miklos G.L.G."/>
            <person name="Abril J.F."/>
            <person name="Agbayani A."/>
            <person name="An H.-J."/>
            <person name="Andrews-Pfannkoch C."/>
            <person name="Baldwin D."/>
            <person name="Ballew R.M."/>
            <person name="Basu A."/>
            <person name="Baxendale J."/>
            <person name="Bayraktaroglu L."/>
            <person name="Beasley E.M."/>
            <person name="Beeson K.Y."/>
            <person name="Benos P.V."/>
            <person name="Berman B.P."/>
            <person name="Bhandari D."/>
            <person name="Bolshakov S."/>
            <person name="Borkova D."/>
            <person name="Botchan M.R."/>
            <person name="Bouck J."/>
            <person name="Brokstein P."/>
            <person name="Brottier P."/>
            <person name="Burtis K.C."/>
            <person name="Busam D.A."/>
            <person name="Butler H."/>
            <person name="Cadieu E."/>
            <person name="Center A."/>
            <person name="Chandra I."/>
            <person name="Cherry J.M."/>
            <person name="Cawley S."/>
            <person name="Dahlke C."/>
            <person name="Davenport L.B."/>
            <person name="Davies P."/>
            <person name="de Pablos B."/>
            <person name="Delcher A."/>
            <person name="Deng Z."/>
            <person name="Mays A.D."/>
            <person name="Dew I."/>
            <person name="Dietz S.M."/>
            <person name="Dodson K."/>
            <person name="Doup L.E."/>
            <person name="Downes M."/>
            <person name="Dugan-Rocha S."/>
            <person name="Dunkov B.C."/>
            <person name="Dunn P."/>
            <person name="Durbin K.J."/>
            <person name="Evangelista C.C."/>
            <person name="Ferraz C."/>
            <person name="Ferriera S."/>
            <person name="Fleischmann W."/>
            <person name="Fosler C."/>
            <person name="Gabrielian A.E."/>
            <person name="Garg N.S."/>
            <person name="Gelbart W.M."/>
            <person name="Glasser K."/>
            <person name="Glodek A."/>
            <person name="Gong F."/>
            <person name="Gorrell J.H."/>
            <person name="Gu Z."/>
            <person name="Guan P."/>
            <person name="Harris M."/>
            <person name="Harris N.L."/>
            <person name="Harvey D.A."/>
            <person name="Heiman T.J."/>
            <person name="Hernandez J.R."/>
            <person name="Houck J."/>
            <person name="Hostin D."/>
            <person name="Houston K.A."/>
            <person name="Howland T.J."/>
            <person name="Wei M.-H."/>
            <person name="Ibegwam C."/>
            <person name="Jalali M."/>
            <person name="Kalush F."/>
            <person name="Karpen G.H."/>
            <person name="Ke Z."/>
            <person name="Kennison J.A."/>
            <person name="Ketchum K.A."/>
            <person name="Kimmel B.E."/>
            <person name="Kodira C.D."/>
            <person name="Kraft C.L."/>
            <person name="Kravitz S."/>
            <person name="Kulp D."/>
            <person name="Lai Z."/>
            <person name="Lasko P."/>
            <person name="Lei Y."/>
            <person name="Levitsky A.A."/>
            <person name="Li J.H."/>
            <person name="Li Z."/>
            <person name="Liang Y."/>
            <person name="Lin X."/>
            <person name="Liu X."/>
            <person name="Mattei B."/>
            <person name="McIntosh T.C."/>
            <person name="McLeod M.P."/>
            <person name="McPherson D."/>
            <person name="Merkulov G."/>
            <person name="Milshina N.V."/>
            <person name="Mobarry C."/>
            <person name="Morris J."/>
            <person name="Moshrefi A."/>
            <person name="Mount S.M."/>
            <person name="Moy M."/>
            <person name="Murphy B."/>
            <person name="Murphy L."/>
            <person name="Muzny D.M."/>
            <person name="Nelson D.L."/>
            <person name="Nelson D.R."/>
            <person name="Nelson K.A."/>
            <person name="Nixon K."/>
            <person name="Nusskern D.R."/>
            <person name="Pacleb J.M."/>
            <person name="Palazzolo M."/>
            <person name="Pittman G.S."/>
            <person name="Pan S."/>
            <person name="Pollard J."/>
            <person name="Puri V."/>
            <person name="Reese M.G."/>
            <person name="Reinert K."/>
            <person name="Remington K."/>
            <person name="Saunders R.D.C."/>
            <person name="Scheeler F."/>
            <person name="Shen H."/>
            <person name="Shue B.C."/>
            <person name="Siden-Kiamos I."/>
            <person name="Simpson M."/>
            <person name="Skupski M.P."/>
            <person name="Smith T.J."/>
            <person name="Spier E."/>
            <person name="Spradling A.C."/>
            <person name="Stapleton M."/>
            <person name="Strong R."/>
            <person name="Sun E."/>
            <person name="Svirskas R."/>
            <person name="Tector C."/>
            <person name="Turner R."/>
            <person name="Venter E."/>
            <person name="Wang A.H."/>
            <person name="Wang X."/>
            <person name="Wang Z.-Y."/>
            <person name="Wassarman D.A."/>
            <person name="Weinstock G.M."/>
            <person name="Weissenbach J."/>
            <person name="Williams S.M."/>
            <person name="Woodage T."/>
            <person name="Worley K.C."/>
            <person name="Wu D."/>
            <person name="Yang S."/>
            <person name="Yao Q.A."/>
            <person name="Ye J."/>
            <person name="Yeh R.-F."/>
            <person name="Zaveri J.S."/>
            <person name="Zhan M."/>
            <person name="Zhang G."/>
            <person name="Zhao Q."/>
            <person name="Zheng L."/>
            <person name="Zheng X.H."/>
            <person name="Zhong F.N."/>
            <person name="Zhong W."/>
            <person name="Zhou X."/>
            <person name="Zhu S.C."/>
            <person name="Zhu X."/>
            <person name="Smith H.O."/>
            <person name="Gibbs R.A."/>
            <person name="Myers E.W."/>
            <person name="Rubin G.M."/>
            <person name="Venter J.C."/>
        </authorList>
    </citation>
    <scope>NUCLEOTIDE SEQUENCE [LARGE SCALE GENOMIC DNA]</scope>
    <source>
        <strain>Berkeley</strain>
    </source>
</reference>
<reference key="4">
    <citation type="journal article" date="2002" name="Genome Biol.">
        <title>Annotation of the Drosophila melanogaster euchromatic genome: a systematic review.</title>
        <authorList>
            <person name="Misra S."/>
            <person name="Crosby M.A."/>
            <person name="Mungall C.J."/>
            <person name="Matthews B.B."/>
            <person name="Campbell K.S."/>
            <person name="Hradecky P."/>
            <person name="Huang Y."/>
            <person name="Kaminker J.S."/>
            <person name="Millburn G.H."/>
            <person name="Prochnik S.E."/>
            <person name="Smith C.D."/>
            <person name="Tupy J.L."/>
            <person name="Whitfield E.J."/>
            <person name="Bayraktaroglu L."/>
            <person name="Berman B.P."/>
            <person name="Bettencourt B.R."/>
            <person name="Celniker S.E."/>
            <person name="de Grey A.D.N.J."/>
            <person name="Drysdale R.A."/>
            <person name="Harris N.L."/>
            <person name="Richter J."/>
            <person name="Russo S."/>
            <person name="Schroeder A.J."/>
            <person name="Shu S.Q."/>
            <person name="Stapleton M."/>
            <person name="Yamada C."/>
            <person name="Ashburner M."/>
            <person name="Gelbart W.M."/>
            <person name="Rubin G.M."/>
            <person name="Lewis S.E."/>
        </authorList>
    </citation>
    <scope>GENOME REANNOTATION</scope>
    <scope>ALTERNATIVE SPLICING</scope>
    <source>
        <strain>Berkeley</strain>
    </source>
</reference>
<reference key="5">
    <citation type="journal article" date="2000" name="Science">
        <title>From sequence to chromosome: the tip of the X chromosome of D. melanogaster.</title>
        <authorList>
            <person name="Benos P.V."/>
            <person name="Gatt M.K."/>
            <person name="Ashburner M."/>
            <person name="Murphy L."/>
            <person name="Harris D."/>
            <person name="Barrell B.G."/>
            <person name="Ferraz C."/>
            <person name="Vidal S."/>
            <person name="Brun C."/>
            <person name="Demailles J."/>
            <person name="Cadieu E."/>
            <person name="Dreano S."/>
            <person name="Gloux S."/>
            <person name="Lelaure V."/>
            <person name="Mottier S."/>
            <person name="Galibert F."/>
            <person name="Borkova D."/>
            <person name="Minana B."/>
            <person name="Kafatos F.C."/>
            <person name="Louis C."/>
            <person name="Siden-Kiamos I."/>
            <person name="Bolshakov S."/>
            <person name="Papagiannakis G."/>
            <person name="Spanos L."/>
            <person name="Cox S."/>
            <person name="Madueno E."/>
            <person name="de Pablos B."/>
            <person name="Modolell J."/>
            <person name="Peter A."/>
            <person name="Schoettler P."/>
            <person name="Werner M."/>
            <person name="Mourkioti F."/>
            <person name="Beinert N."/>
            <person name="Dowe G."/>
            <person name="Schaefer U."/>
            <person name="Jaeckle H."/>
            <person name="Bucheton A."/>
            <person name="Callister D.M."/>
            <person name="Campbell L.A."/>
            <person name="Darlamitsou A."/>
            <person name="Henderson N.S."/>
            <person name="McMillan P.J."/>
            <person name="Salles C."/>
            <person name="Tait E.A."/>
            <person name="Valenti P."/>
            <person name="Saunders R.D.C."/>
            <person name="Glover D.M."/>
        </authorList>
    </citation>
    <scope>NUCLEOTIDE SEQUENCE [LARGE SCALE GENOMIC DNA]</scope>
    <scope>ALTERNATIVE SPLICING (ISOFORMS I; G AND VII)</scope>
    <source>
        <strain>Oregon-R</strain>
    </source>
</reference>
<reference key="6">
    <citation type="journal article" date="2002" name="Genome Biol.">
        <title>A Drosophila full-length cDNA resource.</title>
        <authorList>
            <person name="Stapleton M."/>
            <person name="Carlson J.W."/>
            <person name="Brokstein P."/>
            <person name="Yu C."/>
            <person name="Champe M."/>
            <person name="George R.A."/>
            <person name="Guarin H."/>
            <person name="Kronmiller B."/>
            <person name="Pacleb J.M."/>
            <person name="Park S."/>
            <person name="Wan K.H."/>
            <person name="Rubin G.M."/>
            <person name="Celniker S.E."/>
        </authorList>
    </citation>
    <scope>NUCLEOTIDE SEQUENCE [LARGE SCALE MRNA] (ISOFORM VII)</scope>
    <source>
        <strain>Berkeley</strain>
        <tissue>Head</tissue>
    </source>
</reference>
<feature type="chain" id="PRO_0000023342" description="3',5'-cyclic-AMP phosphodiesterase">
    <location>
        <begin position="1"/>
        <end position="1070"/>
    </location>
</feature>
<feature type="domain" description="PDEase" evidence="3">
    <location>
        <begin position="656"/>
        <end position="985"/>
    </location>
</feature>
<feature type="region of interest" description="Disordered" evidence="4">
    <location>
        <begin position="1"/>
        <end position="91"/>
    </location>
</feature>
<feature type="region of interest" description="Disordered" evidence="4">
    <location>
        <begin position="166"/>
        <end position="215"/>
    </location>
</feature>
<feature type="region of interest" description="Disordered" evidence="4">
    <location>
        <begin position="487"/>
        <end position="516"/>
    </location>
</feature>
<feature type="region of interest" description="Disordered" evidence="4">
    <location>
        <begin position="615"/>
        <end position="653"/>
    </location>
</feature>
<feature type="region of interest" description="Disordered" evidence="4">
    <location>
        <begin position="1007"/>
        <end position="1070"/>
    </location>
</feature>
<feature type="compositionally biased region" description="Low complexity" evidence="4">
    <location>
        <begin position="51"/>
        <end position="69"/>
    </location>
</feature>
<feature type="compositionally biased region" description="Polar residues" evidence="4">
    <location>
        <begin position="70"/>
        <end position="84"/>
    </location>
</feature>
<feature type="compositionally biased region" description="Low complexity" evidence="4">
    <location>
        <begin position="166"/>
        <end position="210"/>
    </location>
</feature>
<feature type="compositionally biased region" description="Polar residues" evidence="4">
    <location>
        <begin position="488"/>
        <end position="506"/>
    </location>
</feature>
<feature type="compositionally biased region" description="Acidic residues" evidence="4">
    <location>
        <begin position="1007"/>
        <end position="1024"/>
    </location>
</feature>
<feature type="compositionally biased region" description="Low complexity" evidence="4">
    <location>
        <begin position="1025"/>
        <end position="1042"/>
    </location>
</feature>
<feature type="compositionally biased region" description="Gly residues" evidence="4">
    <location>
        <begin position="1043"/>
        <end position="1054"/>
    </location>
</feature>
<feature type="compositionally biased region" description="Polar residues" evidence="4">
    <location>
        <begin position="1060"/>
        <end position="1070"/>
    </location>
</feature>
<feature type="active site" description="Proton donor" evidence="1">
    <location>
        <position position="732"/>
    </location>
</feature>
<feature type="binding site" evidence="1">
    <location>
        <begin position="732"/>
        <end position="736"/>
    </location>
    <ligand>
        <name>3',5'-cyclic AMP</name>
        <dbReference type="ChEBI" id="CHEBI:58165"/>
    </ligand>
</feature>
<feature type="binding site" evidence="1">
    <location>
        <position position="736"/>
    </location>
    <ligand>
        <name>a divalent metal cation</name>
        <dbReference type="ChEBI" id="CHEBI:60240"/>
        <label>1</label>
    </ligand>
</feature>
<feature type="binding site" evidence="1">
    <location>
        <position position="772"/>
    </location>
    <ligand>
        <name>a divalent metal cation</name>
        <dbReference type="ChEBI" id="CHEBI:60240"/>
        <label>1</label>
    </ligand>
</feature>
<feature type="binding site" evidence="1">
    <location>
        <position position="773"/>
    </location>
    <ligand>
        <name>3',5'-cyclic AMP</name>
        <dbReference type="ChEBI" id="CHEBI:58165"/>
    </ligand>
</feature>
<feature type="binding site" evidence="1">
    <location>
        <position position="773"/>
    </location>
    <ligand>
        <name>a divalent metal cation</name>
        <dbReference type="ChEBI" id="CHEBI:60240"/>
        <label>1</label>
    </ligand>
</feature>
<feature type="binding site" evidence="1">
    <location>
        <position position="773"/>
    </location>
    <ligand>
        <name>a divalent metal cation</name>
        <dbReference type="ChEBI" id="CHEBI:60240"/>
        <label>2</label>
    </ligand>
</feature>
<feature type="binding site" evidence="1">
    <location>
        <position position="890"/>
    </location>
    <ligand>
        <name>3',5'-cyclic AMP</name>
        <dbReference type="ChEBI" id="CHEBI:58165"/>
    </ligand>
</feature>
<feature type="binding site" evidence="1">
    <location>
        <position position="890"/>
    </location>
    <ligand>
        <name>a divalent metal cation</name>
        <dbReference type="ChEBI" id="CHEBI:60240"/>
        <label>1</label>
    </ligand>
</feature>
<feature type="binding site" evidence="1">
    <location>
        <position position="941"/>
    </location>
    <ligand>
        <name>3',5'-cyclic AMP</name>
        <dbReference type="ChEBI" id="CHEBI:58165"/>
    </ligand>
</feature>
<feature type="site" description="Binds AMP, but not cAMP" evidence="1">
    <location>
        <position position="893"/>
    </location>
</feature>
<feature type="splice variant" id="VSP_004587" description="In isoform VII." evidence="6">
    <location>
        <begin position="1"/>
        <end position="549"/>
    </location>
</feature>
<feature type="splice variant" id="VSP_018826" description="In isoform III." evidence="7">
    <location>
        <begin position="1"/>
        <end position="428"/>
    </location>
</feature>
<feature type="splice variant" id="VSP_004585" description="In isoform IV." evidence="7">
    <location>
        <begin position="1"/>
        <end position="369"/>
    </location>
</feature>
<feature type="splice variant" id="VSP_054955" description="In isoform R." evidence="7">
    <location>
        <begin position="1"/>
        <end position="367"/>
    </location>
</feature>
<feature type="splice variant" id="VSP_054956" description="In isoform U." evidence="8">
    <location>
        <begin position="1"/>
        <end position="355"/>
    </location>
</feature>
<feature type="splice variant" id="VSP_054957" description="In isoform U." evidence="8">
    <original>GLHDMLKRAQGRSPLSPRISFPGSDSDLFG</original>
    <variation>MQAEQGSIGDLQKYHSRYLKNRRHTLANVR</variation>
    <location>
        <begin position="356"/>
        <end position="385"/>
    </location>
</feature>
<feature type="splice variant" id="VSP_054958" description="In isoform R." evidence="7">
    <original>SPLSPRISFPGSDSDLFG</original>
    <variation>MVCSFCCCCYNFRNSPSS</variation>
    <location>
        <begin position="368"/>
        <end position="385"/>
    </location>
</feature>
<feature type="splice variant" id="VSP_004586" description="In isoform IV." evidence="7">
    <original>LSPRISFPGSDSDLFG</original>
    <variation>MVCSFCCCCYNFRNSP</variation>
    <location>
        <begin position="370"/>
        <end position="385"/>
    </location>
</feature>
<feature type="splice variant" id="VSP_004588" description="In isoform V." evidence="7">
    <location>
        <begin position="444"/>
        <end position="456"/>
    </location>
</feature>
<feature type="splice variant" id="VSP_004589" description="In isoform VI." evidence="7">
    <location>
        <begin position="493"/>
        <end position="494"/>
    </location>
</feature>
<feature type="sequence conflict" description="In Ref. 1; CAA38960 and 2; AAC34201." evidence="8" ref="1 2">
    <original>D</original>
    <variation>S</variation>
    <location>
        <position position="958"/>
    </location>
</feature>
<feature type="sequence conflict" description="In Ref. 1; CAA38960 and 2; AAC34201." evidence="8" ref="1 2">
    <original>S</original>
    <variation>T</variation>
    <location>
        <position position="1027"/>
    </location>
</feature>
<feature type="sequence conflict" description="In Ref. 1; CAA38960 and 2; AAC34201." evidence="8" ref="1 2">
    <original>SG</original>
    <variation>R</variation>
    <location>
        <begin position="1042"/>
        <end position="1043"/>
    </location>
</feature>
<evidence type="ECO:0000250" key="1"/>
<evidence type="ECO:0000250" key="2">
    <source>
        <dbReference type="UniProtKB" id="Q07343"/>
    </source>
</evidence>
<evidence type="ECO:0000255" key="3">
    <source>
        <dbReference type="PROSITE-ProRule" id="PRU01192"/>
    </source>
</evidence>
<evidence type="ECO:0000256" key="4">
    <source>
        <dbReference type="SAM" id="MobiDB-lite"/>
    </source>
</evidence>
<evidence type="ECO:0000269" key="5">
    <source>
    </source>
</evidence>
<evidence type="ECO:0000303" key="6">
    <source>
    </source>
</evidence>
<evidence type="ECO:0000303" key="7">
    <source>
    </source>
</evidence>
<evidence type="ECO:0000305" key="8"/>
<evidence type="ECO:0000305" key="9">
    <source>
    </source>
</evidence>
<comment type="function">
    <text evidence="1 5">Hydrolyzes the second messenger cAMP, which is a key regulator of many important physiological processes (By similarity). Vital for female fertility. Required for learning/memory.</text>
</comment>
<comment type="catalytic activity">
    <reaction evidence="5">
        <text>3',5'-cyclic AMP + H2O = AMP + H(+)</text>
        <dbReference type="Rhea" id="RHEA:25277"/>
        <dbReference type="ChEBI" id="CHEBI:15377"/>
        <dbReference type="ChEBI" id="CHEBI:15378"/>
        <dbReference type="ChEBI" id="CHEBI:58165"/>
        <dbReference type="ChEBI" id="CHEBI:456215"/>
        <dbReference type="EC" id="3.1.4.53"/>
    </reaction>
    <physiologicalReaction direction="left-to-right" evidence="9">
        <dbReference type="Rhea" id="RHEA:25278"/>
    </physiologicalReaction>
</comment>
<comment type="cofactor">
    <cofactor evidence="2">
        <name>a divalent metal cation</name>
        <dbReference type="ChEBI" id="CHEBI:60240"/>
    </cofactor>
    <text evidence="2">Binds 2 divalent metal cations per subunit. Site 1 may preferentially bind zinc ions, while site 2 has a preference for magnesium and/or manganese ions.</text>
</comment>
<comment type="pathway">
    <text evidence="2">Purine metabolism; 3',5'-cyclic AMP degradation; AMP from 3',5'-cyclic AMP: step 1/1.</text>
</comment>
<comment type="subunit">
    <text evidence="5">Monomer.</text>
</comment>
<comment type="alternative products">
    <event type="alternative splicing"/>
    <event type="alternative initiation"/>
    <isoform>
        <id>P12252-1</id>
        <name>II</name>
        <name>I</name>
        <name>J</name>
        <sequence type="displayed"/>
    </isoform>
    <isoform>
        <id>P12252-3</id>
        <name>IV</name>
        <name>A</name>
        <sequence type="described" ref="VSP_004585 VSP_004586"/>
    </isoform>
    <isoform>
        <id>P12252-4</id>
        <name>V</name>
        <name>C</name>
        <sequence type="described" ref="VSP_004588"/>
    </isoform>
    <isoform>
        <id>P12252-5</id>
        <name>VI</name>
        <name>D</name>
        <sequence type="described" ref="VSP_004589"/>
    </isoform>
    <isoform>
        <id>P12252-6</id>
        <name>VII</name>
        <name>L</name>
        <sequence type="described" ref="VSP_004587"/>
    </isoform>
    <isoform>
        <id>P12252-7</id>
        <name>III</name>
        <name>E</name>
        <name>P</name>
        <sequence type="described" ref="VSP_018826"/>
    </isoform>
    <isoform>
        <id>P12252-8</id>
        <id>Q9W4T0-1</id>
        <name>R</name>
        <name>Q</name>
        <sequence type="described" ref="VSP_054955 VSP_054958"/>
    </isoform>
    <isoform>
        <id>P12252-9</id>
        <name>U</name>
        <name>T</name>
        <sequence type="described" ref="VSP_054956 VSP_054957"/>
    </isoform>
    <isoform>
        <id>Q9W4T4-1</id>
        <name>I</name>
        <name>B</name>
        <name>S</name>
        <sequence type="external"/>
    </isoform>
    <isoform>
        <id>Q8IRU4-1</id>
        <name>F</name>
        <sequence type="external"/>
    </isoform>
    <isoform>
        <id>Q9W4S9-2</id>
        <name>G</name>
        <sequence type="external"/>
    </isoform>
    <isoform>
        <id>Q9W4S9-1</id>
        <name>N</name>
        <sequence type="external"/>
    </isoform>
</comment>
<comment type="miscellaneous">
    <molecule>Isoform III</molecule>
    <text evidence="8">Produced by alternative initiation at Met-429 of isoform II.</text>
</comment>
<comment type="similarity">
    <text evidence="8">Belongs to the cyclic nucleotide phosphodiesterase family. PDE4 subfamily.</text>
</comment>
<comment type="sequence caution" evidence="8">
    <conflict type="erroneous initiation">
        <sequence resource="EMBL-CDS" id="AAC34201"/>
    </conflict>
    <text>Truncated N-terminus.</text>
</comment>
<comment type="sequence caution" evidence="8">
    <conflict type="erroneous gene model prediction">
        <sequence resource="EMBL-CDS" id="CAA38960"/>
    </conflict>
</comment>
<comment type="sequence caution" evidence="8">
    <conflict type="erroneous gene model prediction">
        <sequence resource="EMBL-CDS" id="CAD24781"/>
    </conflict>
</comment>
<protein>
    <recommendedName>
        <fullName evidence="8">3',5'-cyclic-AMP phosphodiesterase</fullName>
        <ecNumber evidence="5">3.1.4.53</ecNumber>
    </recommendedName>
    <alternativeName>
        <fullName>Learning/memory process protein</fullName>
    </alternativeName>
    <alternativeName>
        <fullName>Protein dunce</fullName>
    </alternativeName>
    <alternativeName>
        <fullName evidence="8">cAMP-specific phosphodiesterase</fullName>
    </alternativeName>
</protein>
<proteinExistence type="evidence at protein level"/>
<gene>
    <name type="primary">dnc</name>
    <name type="ORF">CG32498</name>
</gene>